<protein>
    <recommendedName>
        <fullName>Uncharacterized protein C191.06</fullName>
    </recommendedName>
</protein>
<organism>
    <name type="scientific">Schizosaccharomyces pombe (strain 972 / ATCC 24843)</name>
    <name type="common">Fission yeast</name>
    <dbReference type="NCBI Taxonomy" id="284812"/>
    <lineage>
        <taxon>Eukaryota</taxon>
        <taxon>Fungi</taxon>
        <taxon>Dikarya</taxon>
        <taxon>Ascomycota</taxon>
        <taxon>Taphrinomycotina</taxon>
        <taxon>Schizosaccharomycetes</taxon>
        <taxon>Schizosaccharomycetales</taxon>
        <taxon>Schizosaccharomycetaceae</taxon>
        <taxon>Schizosaccharomyces</taxon>
    </lineage>
</organism>
<keyword id="KW-1185">Reference proteome</keyword>
<sequence length="138" mass="16229">MSHLFILSCSVYDFSSILLHQYFTQFFVLRYASPSMHLDWRFPSLRIHSYPKDQSTHAWKMHCMPTEIIAYQPIPVFQRLLHSNDIYFPYFQTRYTTLIMFNTVCSSSPNPVFTLTKVIARKKGKHWIGSPCHSAESS</sequence>
<proteinExistence type="predicted"/>
<name>YQ66_SCHPO</name>
<accession>Q9Y7Q0</accession>
<reference key="1">
    <citation type="journal article" date="2002" name="Nature">
        <title>The genome sequence of Schizosaccharomyces pombe.</title>
        <authorList>
            <person name="Wood V."/>
            <person name="Gwilliam R."/>
            <person name="Rajandream M.A."/>
            <person name="Lyne M.H."/>
            <person name="Lyne R."/>
            <person name="Stewart A."/>
            <person name="Sgouros J.G."/>
            <person name="Peat N."/>
            <person name="Hayles J."/>
            <person name="Baker S.G."/>
            <person name="Basham D."/>
            <person name="Bowman S."/>
            <person name="Brooks K."/>
            <person name="Brown D."/>
            <person name="Brown S."/>
            <person name="Chillingworth T."/>
            <person name="Churcher C.M."/>
            <person name="Collins M."/>
            <person name="Connor R."/>
            <person name="Cronin A."/>
            <person name="Davis P."/>
            <person name="Feltwell T."/>
            <person name="Fraser A."/>
            <person name="Gentles S."/>
            <person name="Goble A."/>
            <person name="Hamlin N."/>
            <person name="Harris D.E."/>
            <person name="Hidalgo J."/>
            <person name="Hodgson G."/>
            <person name="Holroyd S."/>
            <person name="Hornsby T."/>
            <person name="Howarth S."/>
            <person name="Huckle E.J."/>
            <person name="Hunt S."/>
            <person name="Jagels K."/>
            <person name="James K.D."/>
            <person name="Jones L."/>
            <person name="Jones M."/>
            <person name="Leather S."/>
            <person name="McDonald S."/>
            <person name="McLean J."/>
            <person name="Mooney P."/>
            <person name="Moule S."/>
            <person name="Mungall K.L."/>
            <person name="Murphy L.D."/>
            <person name="Niblett D."/>
            <person name="Odell C."/>
            <person name="Oliver K."/>
            <person name="O'Neil S."/>
            <person name="Pearson D."/>
            <person name="Quail M.A."/>
            <person name="Rabbinowitsch E."/>
            <person name="Rutherford K.M."/>
            <person name="Rutter S."/>
            <person name="Saunders D."/>
            <person name="Seeger K."/>
            <person name="Sharp S."/>
            <person name="Skelton J."/>
            <person name="Simmonds M.N."/>
            <person name="Squares R."/>
            <person name="Squares S."/>
            <person name="Stevens K."/>
            <person name="Taylor K."/>
            <person name="Taylor R.G."/>
            <person name="Tivey A."/>
            <person name="Walsh S.V."/>
            <person name="Warren T."/>
            <person name="Whitehead S."/>
            <person name="Woodward J.R."/>
            <person name="Volckaert G."/>
            <person name="Aert R."/>
            <person name="Robben J."/>
            <person name="Grymonprez B."/>
            <person name="Weltjens I."/>
            <person name="Vanstreels E."/>
            <person name="Rieger M."/>
            <person name="Schaefer M."/>
            <person name="Mueller-Auer S."/>
            <person name="Gabel C."/>
            <person name="Fuchs M."/>
            <person name="Duesterhoeft A."/>
            <person name="Fritzc C."/>
            <person name="Holzer E."/>
            <person name="Moestl D."/>
            <person name="Hilbert H."/>
            <person name="Borzym K."/>
            <person name="Langer I."/>
            <person name="Beck A."/>
            <person name="Lehrach H."/>
            <person name="Reinhardt R."/>
            <person name="Pohl T.M."/>
            <person name="Eger P."/>
            <person name="Zimmermann W."/>
            <person name="Wedler H."/>
            <person name="Wambutt R."/>
            <person name="Purnelle B."/>
            <person name="Goffeau A."/>
            <person name="Cadieu E."/>
            <person name="Dreano S."/>
            <person name="Gloux S."/>
            <person name="Lelaure V."/>
            <person name="Mottier S."/>
            <person name="Galibert F."/>
            <person name="Aves S.J."/>
            <person name="Xiang Z."/>
            <person name="Hunt C."/>
            <person name="Moore K."/>
            <person name="Hurst S.M."/>
            <person name="Lucas M."/>
            <person name="Rochet M."/>
            <person name="Gaillardin C."/>
            <person name="Tallada V.A."/>
            <person name="Garzon A."/>
            <person name="Thode G."/>
            <person name="Daga R.R."/>
            <person name="Cruzado L."/>
            <person name="Jimenez J."/>
            <person name="Sanchez M."/>
            <person name="del Rey F."/>
            <person name="Benito J."/>
            <person name="Dominguez A."/>
            <person name="Revuelta J.L."/>
            <person name="Moreno S."/>
            <person name="Armstrong J."/>
            <person name="Forsburg S.L."/>
            <person name="Cerutti L."/>
            <person name="Lowe T."/>
            <person name="McCombie W.R."/>
            <person name="Paulsen I."/>
            <person name="Potashkin J."/>
            <person name="Shpakovski G.V."/>
            <person name="Ussery D."/>
            <person name="Barrell B.G."/>
            <person name="Nurse P."/>
        </authorList>
    </citation>
    <scope>NUCLEOTIDE SEQUENCE [LARGE SCALE GENOMIC DNA]</scope>
    <source>
        <strain>972 / ATCC 24843</strain>
    </source>
</reference>
<feature type="chain" id="PRO_0000116884" description="Uncharacterized protein C191.06">
    <location>
        <begin position="1"/>
        <end position="138"/>
    </location>
</feature>
<gene>
    <name type="ORF">SPCC191.06</name>
</gene>
<dbReference type="EMBL" id="CU329672">
    <property type="protein sequence ID" value="CAB41052.1"/>
    <property type="molecule type" value="Genomic_DNA"/>
</dbReference>
<dbReference type="PIR" id="T41219">
    <property type="entry name" value="T41219"/>
</dbReference>
<dbReference type="RefSeq" id="NP_588295.1">
    <property type="nucleotide sequence ID" value="NM_001023285.2"/>
</dbReference>
<dbReference type="PaxDb" id="4896-SPCC191.06.1"/>
<dbReference type="EnsemblFungi" id="SPCC191.06.1">
    <property type="protein sequence ID" value="SPCC191.06.1:pep"/>
    <property type="gene ID" value="SPCC191.06"/>
</dbReference>
<dbReference type="PomBase" id="SPCC191.06"/>
<dbReference type="VEuPathDB" id="FungiDB:SPCC191.06"/>
<dbReference type="HOGENOM" id="CLU_1856462_0_0_1"/>
<dbReference type="InParanoid" id="Q9Y7Q0"/>
<dbReference type="PRO" id="PR:Q9Y7Q0"/>
<dbReference type="Proteomes" id="UP000002485">
    <property type="component" value="Chromosome III"/>
</dbReference>
<dbReference type="GO" id="GO:0005739">
    <property type="term" value="C:mitochondrion"/>
    <property type="evidence" value="ECO:0007005"/>
    <property type="project" value="PomBase"/>
</dbReference>